<accession>P30160</accession>
<proteinExistence type="inferred from homology"/>
<protein>
    <recommendedName>
        <fullName>Uncharacterized tatC-like protein ycf43</fullName>
    </recommendedName>
</protein>
<organism>
    <name type="scientific">Dictyota dichotoma</name>
    <dbReference type="NCBI Taxonomy" id="2876"/>
    <lineage>
        <taxon>Eukaryota</taxon>
        <taxon>Sar</taxon>
        <taxon>Stramenopiles</taxon>
        <taxon>Ochrophyta</taxon>
        <taxon>PX clade</taxon>
        <taxon>Phaeophyceae</taxon>
        <taxon>Dictyotales</taxon>
        <taxon>Dictyotaceae</taxon>
        <taxon>Dictyota</taxon>
    </lineage>
</organism>
<name>YCF43_DICDH</name>
<comment type="subcellular location">
    <subcellularLocation>
        <location evidence="2">Plastid</location>
        <location evidence="2">Chloroplast membrane</location>
        <topology evidence="2">Multi-pass membrane protein</topology>
    </subcellularLocation>
</comment>
<comment type="similarity">
    <text evidence="2">Belongs to the TatC family.</text>
</comment>
<feature type="chain" id="PRO_0000098099" description="Uncharacterized tatC-like protein ycf43">
    <location>
        <begin position="1"/>
        <end position="78" status="greater than"/>
    </location>
</feature>
<feature type="transmembrane region" description="Helical" evidence="1">
    <location>
        <begin position="44"/>
        <end position="66"/>
    </location>
</feature>
<feature type="non-terminal residue">
    <location>
        <position position="78"/>
    </location>
</feature>
<dbReference type="EMBL" id="X66939">
    <property type="protein sequence ID" value="CAA47372.1"/>
    <property type="molecule type" value="Genomic_DNA"/>
</dbReference>
<dbReference type="PIR" id="S25700">
    <property type="entry name" value="S25700"/>
</dbReference>
<dbReference type="SMR" id="P30160"/>
<dbReference type="GO" id="GO:0031969">
    <property type="term" value="C:chloroplast membrane"/>
    <property type="evidence" value="ECO:0007669"/>
    <property type="project" value="UniProtKB-SubCell"/>
</dbReference>
<geneLocation type="chloroplast"/>
<reference key="1">
    <citation type="journal article" date="1992" name="Plant Mol. Biol.">
        <title>Nucleotide sequence and phylogenetic implication of the ATPase subunits beta and epsilon encoded in the chloroplast genome of the brown alga Dictyota dichotoma.</title>
        <authorList>
            <person name="Leitsch C.E.W."/>
            <person name="Kowallik K.V."/>
        </authorList>
    </citation>
    <scope>NUCLEOTIDE SEQUENCE [GENOMIC DNA]</scope>
</reference>
<keyword id="KW-0150">Chloroplast</keyword>
<keyword id="KW-0472">Membrane</keyword>
<keyword id="KW-0934">Plastid</keyword>
<keyword id="KW-0812">Transmembrane</keyword>
<keyword id="KW-1133">Transmembrane helix</keyword>
<sequence length="78" mass="9236">MALTRKPNNYLNFEFYSTRGINYSSFSLTELYSFEHFSEIRHRALYSLGFFLCTTIVIFSNIKFVVKILKNSVSMIQF</sequence>
<gene>
    <name type="primary">ycf43</name>
</gene>
<evidence type="ECO:0000255" key="1"/>
<evidence type="ECO:0000305" key="2"/>